<sequence length="348" mass="38667">MKLSDFSFVLPENLIAKYPTQQRTASRLLHLDGKNGKVEHTMFADMLKFVEPGDLLVFNNTRVIPARLLGKKETGGQVEVLIERITSDTTALAHVRASKAPKPGTKLILEEKVNVTVTGRDDALFILQFDHDETVLTLLEAHGHMPLPPYIDRPDENSDKERYQTVYNEKPGAVAAPTAGLHFDDSILNALKEKGVNLAFVTLHVGAGTFQPVRVDNIQEHKMHAEFAEVPQDVVDAVLNTKANGKRVIAVGTTSVRSLESAAKASAERGDEQIIAPFNEDTEIFIYPGFEFKVVDAMFTNFHLPESTLMMLISAFAGKENVMNAYQEAIAKEYRFFSYGDAMFIERA</sequence>
<accession>B4RVF4</accession>
<accession>F2G8L8</accession>
<organism>
    <name type="scientific">Alteromonas mediterranea (strain DSM 17117 / CIP 110805 / LMG 28347 / Deep ecotype)</name>
    <dbReference type="NCBI Taxonomy" id="1774373"/>
    <lineage>
        <taxon>Bacteria</taxon>
        <taxon>Pseudomonadati</taxon>
        <taxon>Pseudomonadota</taxon>
        <taxon>Gammaproteobacteria</taxon>
        <taxon>Alteromonadales</taxon>
        <taxon>Alteromonadaceae</taxon>
        <taxon>Alteromonas/Salinimonas group</taxon>
        <taxon>Alteromonas</taxon>
    </lineage>
</organism>
<reference key="1">
    <citation type="journal article" date="2008" name="ISME J.">
        <title>Comparative genomics of two ecotypes of the marine planktonic copiotroph Alteromonas macleodii suggests alternative lifestyles associated with different kinds of particulate organic matter.</title>
        <authorList>
            <person name="Ivars-Martinez E."/>
            <person name="Martin-Cuadrado A.-B."/>
            <person name="D'Auria G."/>
            <person name="Mira A."/>
            <person name="Ferriera S."/>
            <person name="Johnson J."/>
            <person name="Friedman R."/>
            <person name="Rodriguez-Valera F."/>
        </authorList>
    </citation>
    <scope>NUCLEOTIDE SEQUENCE [LARGE SCALE GENOMIC DNA]</scope>
    <source>
        <strain>DSM 17117 / CIP 110805 / LMG 28347 / Deep ecotype</strain>
    </source>
</reference>
<feature type="chain" id="PRO_1000094749" description="S-adenosylmethionine:tRNA ribosyltransferase-isomerase">
    <location>
        <begin position="1"/>
        <end position="348"/>
    </location>
</feature>
<keyword id="KW-0963">Cytoplasm</keyword>
<keyword id="KW-0671">Queuosine biosynthesis</keyword>
<keyword id="KW-0949">S-adenosyl-L-methionine</keyword>
<keyword id="KW-0808">Transferase</keyword>
<name>QUEA_ALTMD</name>
<comment type="function">
    <text evidence="1">Transfers and isomerizes the ribose moiety from AdoMet to the 7-aminomethyl group of 7-deazaguanine (preQ1-tRNA) to give epoxyqueuosine (oQ-tRNA).</text>
</comment>
<comment type="catalytic activity">
    <reaction evidence="1">
        <text>7-aminomethyl-7-carbaguanosine(34) in tRNA + S-adenosyl-L-methionine = epoxyqueuosine(34) in tRNA + adenine + L-methionine + 2 H(+)</text>
        <dbReference type="Rhea" id="RHEA:32155"/>
        <dbReference type="Rhea" id="RHEA-COMP:10342"/>
        <dbReference type="Rhea" id="RHEA-COMP:18582"/>
        <dbReference type="ChEBI" id="CHEBI:15378"/>
        <dbReference type="ChEBI" id="CHEBI:16708"/>
        <dbReference type="ChEBI" id="CHEBI:57844"/>
        <dbReference type="ChEBI" id="CHEBI:59789"/>
        <dbReference type="ChEBI" id="CHEBI:82833"/>
        <dbReference type="ChEBI" id="CHEBI:194443"/>
        <dbReference type="EC" id="2.4.99.17"/>
    </reaction>
</comment>
<comment type="pathway">
    <text evidence="1">tRNA modification; tRNA-queuosine biosynthesis.</text>
</comment>
<comment type="subunit">
    <text evidence="1">Monomer.</text>
</comment>
<comment type="subcellular location">
    <subcellularLocation>
        <location evidence="1">Cytoplasm</location>
    </subcellularLocation>
</comment>
<comment type="similarity">
    <text evidence="1">Belongs to the QueA family.</text>
</comment>
<protein>
    <recommendedName>
        <fullName evidence="1">S-adenosylmethionine:tRNA ribosyltransferase-isomerase</fullName>
        <ecNumber evidence="1">2.4.99.17</ecNumber>
    </recommendedName>
    <alternativeName>
        <fullName evidence="1">Queuosine biosynthesis protein QueA</fullName>
    </alternativeName>
</protein>
<dbReference type="EC" id="2.4.99.17" evidence="1"/>
<dbReference type="EMBL" id="CP001103">
    <property type="protein sequence ID" value="AEA98728.1"/>
    <property type="molecule type" value="Genomic_DNA"/>
</dbReference>
<dbReference type="RefSeq" id="WP_012519020.1">
    <property type="nucleotide sequence ID" value="NC_011138.3"/>
</dbReference>
<dbReference type="SMR" id="B4RVF4"/>
<dbReference type="KEGG" id="amc:MADE_1012970"/>
<dbReference type="HOGENOM" id="CLU_039110_1_0_6"/>
<dbReference type="UniPathway" id="UPA00392"/>
<dbReference type="Proteomes" id="UP000001870">
    <property type="component" value="Chromosome"/>
</dbReference>
<dbReference type="GO" id="GO:0005737">
    <property type="term" value="C:cytoplasm"/>
    <property type="evidence" value="ECO:0007669"/>
    <property type="project" value="UniProtKB-SubCell"/>
</dbReference>
<dbReference type="GO" id="GO:0051075">
    <property type="term" value="F:S-adenosylmethionine:tRNA ribosyltransferase-isomerase activity"/>
    <property type="evidence" value="ECO:0007669"/>
    <property type="project" value="UniProtKB-EC"/>
</dbReference>
<dbReference type="GO" id="GO:0008616">
    <property type="term" value="P:queuosine biosynthetic process"/>
    <property type="evidence" value="ECO:0007669"/>
    <property type="project" value="UniProtKB-UniRule"/>
</dbReference>
<dbReference type="GO" id="GO:0002099">
    <property type="term" value="P:tRNA wobble guanine modification"/>
    <property type="evidence" value="ECO:0007669"/>
    <property type="project" value="TreeGrafter"/>
</dbReference>
<dbReference type="FunFam" id="3.40.1780.10:FF:000001">
    <property type="entry name" value="S-adenosylmethionine:tRNA ribosyltransferase-isomerase"/>
    <property type="match status" value="1"/>
</dbReference>
<dbReference type="Gene3D" id="2.40.10.240">
    <property type="entry name" value="QueA-like"/>
    <property type="match status" value="1"/>
</dbReference>
<dbReference type="Gene3D" id="3.40.1780.10">
    <property type="entry name" value="QueA-like"/>
    <property type="match status" value="1"/>
</dbReference>
<dbReference type="HAMAP" id="MF_00113">
    <property type="entry name" value="QueA"/>
    <property type="match status" value="1"/>
</dbReference>
<dbReference type="InterPro" id="IPR003699">
    <property type="entry name" value="QueA"/>
</dbReference>
<dbReference type="InterPro" id="IPR042118">
    <property type="entry name" value="QueA_dom1"/>
</dbReference>
<dbReference type="InterPro" id="IPR042119">
    <property type="entry name" value="QueA_dom2"/>
</dbReference>
<dbReference type="InterPro" id="IPR036100">
    <property type="entry name" value="QueA_sf"/>
</dbReference>
<dbReference type="NCBIfam" id="NF001140">
    <property type="entry name" value="PRK00147.1"/>
    <property type="match status" value="1"/>
</dbReference>
<dbReference type="NCBIfam" id="TIGR00113">
    <property type="entry name" value="queA"/>
    <property type="match status" value="1"/>
</dbReference>
<dbReference type="PANTHER" id="PTHR30307">
    <property type="entry name" value="S-ADENOSYLMETHIONINE:TRNA RIBOSYLTRANSFERASE-ISOMERASE"/>
    <property type="match status" value="1"/>
</dbReference>
<dbReference type="PANTHER" id="PTHR30307:SF0">
    <property type="entry name" value="S-ADENOSYLMETHIONINE:TRNA RIBOSYLTRANSFERASE-ISOMERASE"/>
    <property type="match status" value="1"/>
</dbReference>
<dbReference type="Pfam" id="PF02547">
    <property type="entry name" value="Queuosine_synth"/>
    <property type="match status" value="1"/>
</dbReference>
<dbReference type="SUPFAM" id="SSF111337">
    <property type="entry name" value="QueA-like"/>
    <property type="match status" value="1"/>
</dbReference>
<proteinExistence type="inferred from homology"/>
<gene>
    <name evidence="1" type="primary">queA</name>
    <name type="ordered locus">MADE_1012970</name>
</gene>
<evidence type="ECO:0000255" key="1">
    <source>
        <dbReference type="HAMAP-Rule" id="MF_00113"/>
    </source>
</evidence>